<accession>Q03IR9</accession>
<protein>
    <recommendedName>
        <fullName evidence="2">Small ribosomal subunit protein uS12</fullName>
    </recommendedName>
    <alternativeName>
        <fullName evidence="4">30S ribosomal protein S12</fullName>
    </alternativeName>
</protein>
<evidence type="ECO:0000250" key="1"/>
<evidence type="ECO:0000255" key="2">
    <source>
        <dbReference type="HAMAP-Rule" id="MF_00403"/>
    </source>
</evidence>
<evidence type="ECO:0000256" key="3">
    <source>
        <dbReference type="SAM" id="MobiDB-lite"/>
    </source>
</evidence>
<evidence type="ECO:0000305" key="4"/>
<comment type="function">
    <text evidence="2">With S4 and S5 plays an important role in translational accuracy.</text>
</comment>
<comment type="function">
    <text evidence="2">Interacts with and stabilizes bases of the 16S rRNA that are involved in tRNA selection in the A site and with the mRNA backbone. Located at the interface of the 30S and 50S subunits, it traverses the body of the 30S subunit contacting proteins on the other side and probably holding the rRNA structure together. The combined cluster of proteins S8, S12 and S17 appears to hold together the shoulder and platform of the 30S subunit.</text>
</comment>
<comment type="subunit">
    <text evidence="2">Part of the 30S ribosomal subunit. Contacts proteins S8 and S17. May interact with IF1 in the 30S initiation complex.</text>
</comment>
<comment type="similarity">
    <text evidence="2">Belongs to the universal ribosomal protein uS12 family.</text>
</comment>
<keyword id="KW-0488">Methylation</keyword>
<keyword id="KW-0687">Ribonucleoprotein</keyword>
<keyword id="KW-0689">Ribosomal protein</keyword>
<keyword id="KW-0694">RNA-binding</keyword>
<keyword id="KW-0699">rRNA-binding</keyword>
<keyword id="KW-0820">tRNA-binding</keyword>
<dbReference type="EMBL" id="CP000419">
    <property type="protein sequence ID" value="ABJ66903.1"/>
    <property type="molecule type" value="Genomic_DNA"/>
</dbReference>
<dbReference type="RefSeq" id="WP_002884809.1">
    <property type="nucleotide sequence ID" value="NC_008532.1"/>
</dbReference>
<dbReference type="SMR" id="Q03IR9"/>
<dbReference type="GeneID" id="93792954"/>
<dbReference type="KEGG" id="ste:STER_1764"/>
<dbReference type="HOGENOM" id="CLU_104295_1_2_9"/>
<dbReference type="GO" id="GO:0015935">
    <property type="term" value="C:small ribosomal subunit"/>
    <property type="evidence" value="ECO:0007669"/>
    <property type="project" value="InterPro"/>
</dbReference>
<dbReference type="GO" id="GO:0019843">
    <property type="term" value="F:rRNA binding"/>
    <property type="evidence" value="ECO:0007669"/>
    <property type="project" value="UniProtKB-UniRule"/>
</dbReference>
<dbReference type="GO" id="GO:0003735">
    <property type="term" value="F:structural constituent of ribosome"/>
    <property type="evidence" value="ECO:0007669"/>
    <property type="project" value="InterPro"/>
</dbReference>
<dbReference type="GO" id="GO:0000049">
    <property type="term" value="F:tRNA binding"/>
    <property type="evidence" value="ECO:0007669"/>
    <property type="project" value="UniProtKB-UniRule"/>
</dbReference>
<dbReference type="GO" id="GO:0006412">
    <property type="term" value="P:translation"/>
    <property type="evidence" value="ECO:0007669"/>
    <property type="project" value="UniProtKB-UniRule"/>
</dbReference>
<dbReference type="CDD" id="cd03368">
    <property type="entry name" value="Ribosomal_S12"/>
    <property type="match status" value="1"/>
</dbReference>
<dbReference type="FunFam" id="2.40.50.140:FF:000001">
    <property type="entry name" value="30S ribosomal protein S12"/>
    <property type="match status" value="1"/>
</dbReference>
<dbReference type="Gene3D" id="2.40.50.140">
    <property type="entry name" value="Nucleic acid-binding proteins"/>
    <property type="match status" value="1"/>
</dbReference>
<dbReference type="HAMAP" id="MF_00403_B">
    <property type="entry name" value="Ribosomal_uS12_B"/>
    <property type="match status" value="1"/>
</dbReference>
<dbReference type="InterPro" id="IPR012340">
    <property type="entry name" value="NA-bd_OB-fold"/>
</dbReference>
<dbReference type="InterPro" id="IPR006032">
    <property type="entry name" value="Ribosomal_uS12"/>
</dbReference>
<dbReference type="InterPro" id="IPR005679">
    <property type="entry name" value="Ribosomal_uS12_bac"/>
</dbReference>
<dbReference type="NCBIfam" id="TIGR00981">
    <property type="entry name" value="rpsL_bact"/>
    <property type="match status" value="1"/>
</dbReference>
<dbReference type="PANTHER" id="PTHR11652">
    <property type="entry name" value="30S RIBOSOMAL PROTEIN S12 FAMILY MEMBER"/>
    <property type="match status" value="1"/>
</dbReference>
<dbReference type="Pfam" id="PF00164">
    <property type="entry name" value="Ribosom_S12_S23"/>
    <property type="match status" value="1"/>
</dbReference>
<dbReference type="PIRSF" id="PIRSF002133">
    <property type="entry name" value="Ribosomal_S12/S23"/>
    <property type="match status" value="1"/>
</dbReference>
<dbReference type="PRINTS" id="PR01034">
    <property type="entry name" value="RIBOSOMALS12"/>
</dbReference>
<dbReference type="SUPFAM" id="SSF50249">
    <property type="entry name" value="Nucleic acid-binding proteins"/>
    <property type="match status" value="1"/>
</dbReference>
<dbReference type="PROSITE" id="PS00055">
    <property type="entry name" value="RIBOSOMAL_S12"/>
    <property type="match status" value="1"/>
</dbReference>
<organism>
    <name type="scientific">Streptococcus thermophilus (strain ATCC BAA-491 / LMD-9)</name>
    <dbReference type="NCBI Taxonomy" id="322159"/>
    <lineage>
        <taxon>Bacteria</taxon>
        <taxon>Bacillati</taxon>
        <taxon>Bacillota</taxon>
        <taxon>Bacilli</taxon>
        <taxon>Lactobacillales</taxon>
        <taxon>Streptococcaceae</taxon>
        <taxon>Streptococcus</taxon>
    </lineage>
</organism>
<name>RS12_STRTD</name>
<gene>
    <name evidence="2" type="primary">rpsL</name>
    <name type="ordered locus">STER_1764</name>
</gene>
<sequence length="137" mass="15057">MPTINQLVRKPRQSKVVKSKSPALNVGYNSHKKVQTNVSSPQKRGVATRVGTMTPKKPNSALRKFARVRLSNLIEVTAYIPGIGHNLQEHSVVLIRGGRVKDLPGVRYHIVRGALDTAGVADRKQSRSKYGAKRPKG</sequence>
<proteinExistence type="inferred from homology"/>
<feature type="chain" id="PRO_0000296038" description="Small ribosomal subunit protein uS12">
    <location>
        <begin position="1"/>
        <end position="137"/>
    </location>
</feature>
<feature type="region of interest" description="Disordered" evidence="3">
    <location>
        <begin position="33"/>
        <end position="57"/>
    </location>
</feature>
<feature type="modified residue" description="3-methylthioaspartic acid" evidence="1">
    <location>
        <position position="102"/>
    </location>
</feature>
<reference key="1">
    <citation type="journal article" date="2006" name="Proc. Natl. Acad. Sci. U.S.A.">
        <title>Comparative genomics of the lactic acid bacteria.</title>
        <authorList>
            <person name="Makarova K.S."/>
            <person name="Slesarev A."/>
            <person name="Wolf Y.I."/>
            <person name="Sorokin A."/>
            <person name="Mirkin B."/>
            <person name="Koonin E.V."/>
            <person name="Pavlov A."/>
            <person name="Pavlova N."/>
            <person name="Karamychev V."/>
            <person name="Polouchine N."/>
            <person name="Shakhova V."/>
            <person name="Grigoriev I."/>
            <person name="Lou Y."/>
            <person name="Rohksar D."/>
            <person name="Lucas S."/>
            <person name="Huang K."/>
            <person name="Goodstein D.M."/>
            <person name="Hawkins T."/>
            <person name="Plengvidhya V."/>
            <person name="Welker D."/>
            <person name="Hughes J."/>
            <person name="Goh Y."/>
            <person name="Benson A."/>
            <person name="Baldwin K."/>
            <person name="Lee J.-H."/>
            <person name="Diaz-Muniz I."/>
            <person name="Dosti B."/>
            <person name="Smeianov V."/>
            <person name="Wechter W."/>
            <person name="Barabote R."/>
            <person name="Lorca G."/>
            <person name="Altermann E."/>
            <person name="Barrangou R."/>
            <person name="Ganesan B."/>
            <person name="Xie Y."/>
            <person name="Rawsthorne H."/>
            <person name="Tamir D."/>
            <person name="Parker C."/>
            <person name="Breidt F."/>
            <person name="Broadbent J.R."/>
            <person name="Hutkins R."/>
            <person name="O'Sullivan D."/>
            <person name="Steele J."/>
            <person name="Unlu G."/>
            <person name="Saier M.H. Jr."/>
            <person name="Klaenhammer T."/>
            <person name="Richardson P."/>
            <person name="Kozyavkin S."/>
            <person name="Weimer B.C."/>
            <person name="Mills D.A."/>
        </authorList>
    </citation>
    <scope>NUCLEOTIDE SEQUENCE [LARGE SCALE GENOMIC DNA]</scope>
    <source>
        <strain>ATCC BAA-491 / LMD-9</strain>
    </source>
</reference>